<comment type="subcellular location">
    <subcellularLocation>
        <location evidence="2">Membrane</location>
        <topology evidence="2">Single-pass membrane protein</topology>
    </subcellularLocation>
</comment>
<comment type="similarity">
    <text evidence="2">Belongs to the TMCO5 family.</text>
</comment>
<gene>
    <name type="primary">TMCO5B</name>
</gene>
<protein>
    <recommendedName>
        <fullName>Transmembrane and coiled-coil domain-containing protein 5B</fullName>
    </recommendedName>
</protein>
<dbReference type="EMBL" id="AC055874">
    <property type="status" value="NOT_ANNOTATED_CDS"/>
    <property type="molecule type" value="Genomic_DNA"/>
</dbReference>
<dbReference type="SMR" id="A8MYB1"/>
<dbReference type="BioMuta" id="HGNC:34243"/>
<dbReference type="jPOST" id="A8MYB1"/>
<dbReference type="MassIVE" id="A8MYB1"/>
<dbReference type="ProteomicsDB" id="2389"/>
<dbReference type="AGR" id="HGNC:34243"/>
<dbReference type="GeneCards" id="TMCO5B"/>
<dbReference type="HGNC" id="HGNC:34243">
    <property type="gene designation" value="TMCO5B"/>
</dbReference>
<dbReference type="neXtProt" id="NX_A8MYB1"/>
<dbReference type="InParanoid" id="A8MYB1"/>
<dbReference type="PAN-GO" id="A8MYB1">
    <property type="GO annotations" value="0 GO annotations based on evolutionary models"/>
</dbReference>
<dbReference type="PhylomeDB" id="A8MYB1"/>
<dbReference type="Pharos" id="A8MYB1">
    <property type="development level" value="Tdark"/>
</dbReference>
<dbReference type="PRO" id="PR:A8MYB1"/>
<dbReference type="Proteomes" id="UP000005640">
    <property type="component" value="Unplaced"/>
</dbReference>
<dbReference type="RNAct" id="A8MYB1">
    <property type="molecule type" value="protein"/>
</dbReference>
<dbReference type="GO" id="GO:0016020">
    <property type="term" value="C:membrane"/>
    <property type="evidence" value="ECO:0007669"/>
    <property type="project" value="UniProtKB-SubCell"/>
</dbReference>
<dbReference type="InterPro" id="IPR026617">
    <property type="entry name" value="SMCO2/5"/>
</dbReference>
<dbReference type="PANTHER" id="PTHR22422:SF1">
    <property type="entry name" value="TRANSMEMBRANE AND COILED-COIL DOMAIN-CONTAINING PROTEIN 5B"/>
    <property type="match status" value="1"/>
</dbReference>
<dbReference type="PANTHER" id="PTHR22422">
    <property type="entry name" value="TRANSMEMBRANE AND COILED-COIL DOMAIN-CONTAINING PROTEIN 5B-RELATED"/>
    <property type="match status" value="1"/>
</dbReference>
<dbReference type="Pfam" id="PF14992">
    <property type="entry name" value="TMCO5"/>
    <property type="match status" value="1"/>
</dbReference>
<proteinExistence type="inferred from homology"/>
<accession>A8MYB1</accession>
<sequence>MEDVGQNPLDDVKNIFFASSLEAVKQNLDCLNSDLEKDLQKLDMENQVLLRKIKEKEETISSLERKLALSLEEAKEEEELNYVIDEQEESLRELELETAKLEKSNAILSRNVVEVQKKISGLFTNIGLEEETTKQILEEMKARLQKSTESCAKQEEELAKIESDYQSVSDLCKDQVYYIKKYQEVLRKMKEEKETLLLEKQISKAQDDSSQTVKPGSILADTTQRNMERTTIKKQERRCWYKYFQYLTFMVLVFIRLLAYVIFHLQYINPDLLVDVLPLVLSRGTLESLRKVSHPFLTLAVEEALPH</sequence>
<name>TMC5B_HUMAN</name>
<keyword id="KW-0175">Coiled coil</keyword>
<keyword id="KW-0472">Membrane</keyword>
<keyword id="KW-1185">Reference proteome</keyword>
<keyword id="KW-0812">Transmembrane</keyword>
<keyword id="KW-1133">Transmembrane helix</keyword>
<evidence type="ECO:0000255" key="1"/>
<evidence type="ECO:0000305" key="2"/>
<feature type="chain" id="PRO_0000339347" description="Transmembrane and coiled-coil domain-containing protein 5B">
    <location>
        <begin position="1"/>
        <end position="307"/>
    </location>
</feature>
<feature type="transmembrane region" description="Helical" evidence="1">
    <location>
        <begin position="243"/>
        <end position="265"/>
    </location>
</feature>
<feature type="coiled-coil region" evidence="1">
    <location>
        <begin position="17"/>
        <end position="207"/>
    </location>
</feature>
<reference key="1">
    <citation type="journal article" date="2006" name="Nature">
        <title>Analysis of the DNA sequence and duplication history of human chromosome 15.</title>
        <authorList>
            <person name="Zody M.C."/>
            <person name="Garber M."/>
            <person name="Sharpe T."/>
            <person name="Young S.K."/>
            <person name="Rowen L."/>
            <person name="O'Neill K."/>
            <person name="Whittaker C.A."/>
            <person name="Kamal M."/>
            <person name="Chang J.L."/>
            <person name="Cuomo C.A."/>
            <person name="Dewar K."/>
            <person name="FitzGerald M.G."/>
            <person name="Kodira C.D."/>
            <person name="Madan A."/>
            <person name="Qin S."/>
            <person name="Yang X."/>
            <person name="Abbasi N."/>
            <person name="Abouelleil A."/>
            <person name="Arachchi H.M."/>
            <person name="Baradarani L."/>
            <person name="Birditt B."/>
            <person name="Bloom S."/>
            <person name="Bloom T."/>
            <person name="Borowsky M.L."/>
            <person name="Burke J."/>
            <person name="Butler J."/>
            <person name="Cook A."/>
            <person name="DeArellano K."/>
            <person name="DeCaprio D."/>
            <person name="Dorris L. III"/>
            <person name="Dors M."/>
            <person name="Eichler E.E."/>
            <person name="Engels R."/>
            <person name="Fahey J."/>
            <person name="Fleetwood P."/>
            <person name="Friedman C."/>
            <person name="Gearin G."/>
            <person name="Hall J.L."/>
            <person name="Hensley G."/>
            <person name="Johnson E."/>
            <person name="Jones C."/>
            <person name="Kamat A."/>
            <person name="Kaur A."/>
            <person name="Locke D.P."/>
            <person name="Madan A."/>
            <person name="Munson G."/>
            <person name="Jaffe D.B."/>
            <person name="Lui A."/>
            <person name="Macdonald P."/>
            <person name="Mauceli E."/>
            <person name="Naylor J.W."/>
            <person name="Nesbitt R."/>
            <person name="Nicol R."/>
            <person name="O'Leary S.B."/>
            <person name="Ratcliffe A."/>
            <person name="Rounsley S."/>
            <person name="She X."/>
            <person name="Sneddon K.M.B."/>
            <person name="Stewart S."/>
            <person name="Sougnez C."/>
            <person name="Stone S.M."/>
            <person name="Topham K."/>
            <person name="Vincent D."/>
            <person name="Wang S."/>
            <person name="Zimmer A.R."/>
            <person name="Birren B.W."/>
            <person name="Hood L."/>
            <person name="Lander E.S."/>
            <person name="Nusbaum C."/>
        </authorList>
    </citation>
    <scope>NUCLEOTIDE SEQUENCE [LARGE SCALE GENOMIC DNA]</scope>
</reference>
<organism>
    <name type="scientific">Homo sapiens</name>
    <name type="common">Human</name>
    <dbReference type="NCBI Taxonomy" id="9606"/>
    <lineage>
        <taxon>Eukaryota</taxon>
        <taxon>Metazoa</taxon>
        <taxon>Chordata</taxon>
        <taxon>Craniata</taxon>
        <taxon>Vertebrata</taxon>
        <taxon>Euteleostomi</taxon>
        <taxon>Mammalia</taxon>
        <taxon>Eutheria</taxon>
        <taxon>Euarchontoglires</taxon>
        <taxon>Primates</taxon>
        <taxon>Haplorrhini</taxon>
        <taxon>Catarrhini</taxon>
        <taxon>Hominidae</taxon>
        <taxon>Homo</taxon>
    </lineage>
</organism>